<accession>Q9WY40</accession>
<accession>G4FHB1</accession>
<dbReference type="EC" id="2.8.1.-" evidence="3"/>
<dbReference type="EMBL" id="AE000512">
    <property type="protein sequence ID" value="AAD35289.1"/>
    <property type="molecule type" value="Genomic_DNA"/>
</dbReference>
<dbReference type="PIR" id="E72407">
    <property type="entry name" value="E72407"/>
</dbReference>
<dbReference type="RefSeq" id="NP_228012.1">
    <property type="nucleotide sequence ID" value="NC_000853.1"/>
</dbReference>
<dbReference type="RefSeq" id="WP_004082849.1">
    <property type="nucleotide sequence ID" value="NZ_CP011107.1"/>
</dbReference>
<dbReference type="SMR" id="Q9WY40"/>
<dbReference type="STRING" id="243274.TM_0197"/>
<dbReference type="PaxDb" id="243274-THEMA_03745"/>
<dbReference type="EnsemblBacteria" id="AAD35289">
    <property type="protein sequence ID" value="AAD35289"/>
    <property type="gene ID" value="TM_0197"/>
</dbReference>
<dbReference type="KEGG" id="tma:TM0197"/>
<dbReference type="KEGG" id="tmi:THEMA_03745"/>
<dbReference type="KEGG" id="tmm:Tmari_0195"/>
<dbReference type="KEGG" id="tmw:THMA_0204"/>
<dbReference type="PATRIC" id="fig|243274.17.peg.194"/>
<dbReference type="eggNOG" id="COG0037">
    <property type="taxonomic scope" value="Bacteria"/>
</dbReference>
<dbReference type="InParanoid" id="Q9WY40"/>
<dbReference type="OrthoDB" id="9801054at2"/>
<dbReference type="Proteomes" id="UP000008183">
    <property type="component" value="Chromosome"/>
</dbReference>
<dbReference type="GO" id="GO:0002144">
    <property type="term" value="C:cytosolic tRNA wobble base thiouridylase complex"/>
    <property type="evidence" value="ECO:0000318"/>
    <property type="project" value="GO_Central"/>
</dbReference>
<dbReference type="GO" id="GO:0051539">
    <property type="term" value="F:4 iron, 4 sulfur cluster binding"/>
    <property type="evidence" value="ECO:0007669"/>
    <property type="project" value="UniProtKB-KW"/>
</dbReference>
<dbReference type="GO" id="GO:0005524">
    <property type="term" value="F:ATP binding"/>
    <property type="evidence" value="ECO:0007669"/>
    <property type="project" value="UniProtKB-KW"/>
</dbReference>
<dbReference type="GO" id="GO:0046872">
    <property type="term" value="F:metal ion binding"/>
    <property type="evidence" value="ECO:0007669"/>
    <property type="project" value="UniProtKB-KW"/>
</dbReference>
<dbReference type="GO" id="GO:0016740">
    <property type="term" value="F:transferase activity"/>
    <property type="evidence" value="ECO:0007669"/>
    <property type="project" value="UniProtKB-KW"/>
</dbReference>
<dbReference type="GO" id="GO:0000049">
    <property type="term" value="F:tRNA binding"/>
    <property type="evidence" value="ECO:0000318"/>
    <property type="project" value="GO_Central"/>
</dbReference>
<dbReference type="GO" id="GO:0002143">
    <property type="term" value="P:tRNA wobble position uridine thiolation"/>
    <property type="evidence" value="ECO:0000318"/>
    <property type="project" value="GO_Central"/>
</dbReference>
<dbReference type="CDD" id="cd01993">
    <property type="entry name" value="TtuA-like"/>
    <property type="match status" value="1"/>
</dbReference>
<dbReference type="FunFam" id="3.40.50.620:FF:000174">
    <property type="entry name" value="ATPase, PP-loop superfamily"/>
    <property type="match status" value="1"/>
</dbReference>
<dbReference type="Gene3D" id="3.40.50.620">
    <property type="entry name" value="HUPs"/>
    <property type="match status" value="1"/>
</dbReference>
<dbReference type="InterPro" id="IPR014729">
    <property type="entry name" value="Rossmann-like_a/b/a_fold"/>
</dbReference>
<dbReference type="InterPro" id="IPR011063">
    <property type="entry name" value="TilS/TtcA_N"/>
</dbReference>
<dbReference type="InterPro" id="IPR035107">
    <property type="entry name" value="tRNA_thiolation_TtcA_Ctu1"/>
</dbReference>
<dbReference type="InterPro" id="IPR054306">
    <property type="entry name" value="TtuA-like_LIM_N"/>
</dbReference>
<dbReference type="InterPro" id="IPR020554">
    <property type="entry name" value="UPF0021_CS"/>
</dbReference>
<dbReference type="PANTHER" id="PTHR11807">
    <property type="entry name" value="ATPASES OF THE PP SUPERFAMILY-RELATED"/>
    <property type="match status" value="1"/>
</dbReference>
<dbReference type="PANTHER" id="PTHR11807:SF27">
    <property type="entry name" value="TRNA-5-METHYLURIDINE(54) 2-SULFURTRANSFERASE"/>
    <property type="match status" value="1"/>
</dbReference>
<dbReference type="Pfam" id="PF01171">
    <property type="entry name" value="ATP_bind_3"/>
    <property type="match status" value="1"/>
</dbReference>
<dbReference type="Pfam" id="PF22082">
    <property type="entry name" value="TtuA_LIM_N"/>
    <property type="match status" value="1"/>
</dbReference>
<dbReference type="PIRSF" id="PIRSF004976">
    <property type="entry name" value="ATPase_YdaO"/>
    <property type="match status" value="1"/>
</dbReference>
<dbReference type="SUPFAM" id="SSF52402">
    <property type="entry name" value="Adenine nucleotide alpha hydrolases-like"/>
    <property type="match status" value="1"/>
</dbReference>
<dbReference type="PROSITE" id="PS01263">
    <property type="entry name" value="UPF0021"/>
    <property type="match status" value="1"/>
</dbReference>
<keyword id="KW-0004">4Fe-4S</keyword>
<keyword id="KW-0067">ATP-binding</keyword>
<keyword id="KW-0408">Iron</keyword>
<keyword id="KW-0411">Iron-sulfur</keyword>
<keyword id="KW-0460">Magnesium</keyword>
<keyword id="KW-0479">Metal-binding</keyword>
<keyword id="KW-0547">Nucleotide-binding</keyword>
<keyword id="KW-1185">Reference proteome</keyword>
<keyword id="KW-0694">RNA-binding</keyword>
<keyword id="KW-0808">Transferase</keyword>
<keyword id="KW-0819">tRNA processing</keyword>
<keyword id="KW-0820">tRNA-binding</keyword>
<keyword id="KW-0862">Zinc</keyword>
<proteinExistence type="evidence at protein level"/>
<protein>
    <recommendedName>
        <fullName evidence="6">tRNA-5-methyluridine(54) 2-sulfurtransferase</fullName>
        <ecNumber evidence="3">2.8.1.-</ecNumber>
    </recommendedName>
    <alternativeName>
        <fullName>tRNA thiouridine synthetase TtuA</fullName>
    </alternativeName>
</protein>
<organism>
    <name type="scientific">Thermotoga maritima (strain ATCC 43589 / DSM 3109 / JCM 10099 / NBRC 100826 / MSB8)</name>
    <dbReference type="NCBI Taxonomy" id="243274"/>
    <lineage>
        <taxon>Bacteria</taxon>
        <taxon>Thermotogati</taxon>
        <taxon>Thermotogota</taxon>
        <taxon>Thermotogae</taxon>
        <taxon>Thermotogales</taxon>
        <taxon>Thermotogaceae</taxon>
        <taxon>Thermotoga</taxon>
    </lineage>
</organism>
<name>TTUA_THEMA</name>
<evidence type="ECO:0000250" key="1">
    <source>
        <dbReference type="UniProtKB" id="O58038"/>
    </source>
</evidence>
<evidence type="ECO:0000250" key="2">
    <source>
        <dbReference type="UniProtKB" id="Q72LF3"/>
    </source>
</evidence>
<evidence type="ECO:0000269" key="3">
    <source>
    </source>
</evidence>
<evidence type="ECO:0000303" key="4">
    <source>
    </source>
</evidence>
<evidence type="ECO:0000305" key="5"/>
<evidence type="ECO:0000305" key="6">
    <source>
    </source>
</evidence>
<evidence type="ECO:0000312" key="7">
    <source>
        <dbReference type="EMBL" id="AAD35289.1"/>
    </source>
</evidence>
<gene>
    <name evidence="4" type="primary">ttuA</name>
    <name evidence="7" type="ordered locus">TM_0197</name>
</gene>
<feature type="chain" id="PRO_0000442362" description="tRNA-5-methyluridine(54) 2-sulfurtransferase">
    <location>
        <begin position="1"/>
        <end position="304"/>
    </location>
</feature>
<feature type="binding site" evidence="1">
    <location>
        <position position="3"/>
    </location>
    <ligand>
        <name>Zn(2+)</name>
        <dbReference type="ChEBI" id="CHEBI:29105"/>
        <label>1</label>
    </ligand>
</feature>
<feature type="binding site" evidence="1">
    <location>
        <position position="6"/>
    </location>
    <ligand>
        <name>Zn(2+)</name>
        <dbReference type="ChEBI" id="CHEBI:29105"/>
        <label>1</label>
    </ligand>
</feature>
<feature type="binding site" evidence="1">
    <location>
        <position position="22"/>
    </location>
    <ligand>
        <name>Zn(2+)</name>
        <dbReference type="ChEBI" id="CHEBI:29105"/>
        <label>1</label>
    </ligand>
</feature>
<feature type="binding site" evidence="1">
    <location>
        <position position="25"/>
    </location>
    <ligand>
        <name>Zn(2+)</name>
        <dbReference type="ChEBI" id="CHEBI:29105"/>
        <label>1</label>
    </ligand>
</feature>
<feature type="binding site" evidence="1">
    <location>
        <position position="53"/>
    </location>
    <ligand>
        <name>ATP</name>
        <dbReference type="ChEBI" id="CHEBI:30616"/>
    </ligand>
</feature>
<feature type="binding site" evidence="1">
    <location>
        <position position="79"/>
    </location>
    <ligand>
        <name>ATP</name>
        <dbReference type="ChEBI" id="CHEBI:30616"/>
    </ligand>
</feature>
<feature type="binding site" evidence="1">
    <location>
        <position position="131"/>
    </location>
    <ligand>
        <name>[4Fe-4S] cluster</name>
        <dbReference type="ChEBI" id="CHEBI:49883"/>
    </ligand>
</feature>
<feature type="binding site" evidence="1">
    <location>
        <position position="134"/>
    </location>
    <ligand>
        <name>[4Fe-4S] cluster</name>
        <dbReference type="ChEBI" id="CHEBI:49883"/>
    </ligand>
</feature>
<feature type="binding site" evidence="1">
    <location>
        <position position="138"/>
    </location>
    <ligand>
        <name>ATP</name>
        <dbReference type="ChEBI" id="CHEBI:30616"/>
    </ligand>
</feature>
<feature type="binding site" evidence="1">
    <location>
        <position position="157"/>
    </location>
    <ligand>
        <name>ATP</name>
        <dbReference type="ChEBI" id="CHEBI:30616"/>
    </ligand>
</feature>
<feature type="binding site" evidence="1">
    <location>
        <position position="224"/>
    </location>
    <ligand>
        <name>[4Fe-4S] cluster</name>
        <dbReference type="ChEBI" id="CHEBI:49883"/>
    </ligand>
</feature>
<feature type="binding site" evidence="1">
    <location>
        <position position="274"/>
    </location>
    <ligand>
        <name>Zn(2+)</name>
        <dbReference type="ChEBI" id="CHEBI:29105"/>
        <label>2</label>
    </ligand>
</feature>
<feature type="binding site" evidence="1">
    <location>
        <position position="277"/>
    </location>
    <ligand>
        <name>Zn(2+)</name>
        <dbReference type="ChEBI" id="CHEBI:29105"/>
        <label>2</label>
    </ligand>
</feature>
<feature type="binding site" evidence="1">
    <location>
        <position position="286"/>
    </location>
    <ligand>
        <name>Zn(2+)</name>
        <dbReference type="ChEBI" id="CHEBI:29105"/>
        <label>2</label>
    </ligand>
</feature>
<feature type="binding site" evidence="1">
    <location>
        <position position="289"/>
    </location>
    <ligand>
        <name>Zn(2+)</name>
        <dbReference type="ChEBI" id="CHEBI:29105"/>
        <label>2</label>
    </ligand>
</feature>
<reference key="1">
    <citation type="journal article" date="1999" name="Nature">
        <title>Evidence for lateral gene transfer between Archaea and Bacteria from genome sequence of Thermotoga maritima.</title>
        <authorList>
            <person name="Nelson K.E."/>
            <person name="Clayton R.A."/>
            <person name="Gill S.R."/>
            <person name="Gwinn M.L."/>
            <person name="Dodson R.J."/>
            <person name="Haft D.H."/>
            <person name="Hickey E.K."/>
            <person name="Peterson J.D."/>
            <person name="Nelson W.C."/>
            <person name="Ketchum K.A."/>
            <person name="McDonald L.A."/>
            <person name="Utterback T.R."/>
            <person name="Malek J.A."/>
            <person name="Linher K.D."/>
            <person name="Garrett M.M."/>
            <person name="Stewart A.M."/>
            <person name="Cotton M.D."/>
            <person name="Pratt M.S."/>
            <person name="Phillips C.A."/>
            <person name="Richardson D.L."/>
            <person name="Heidelberg J.F."/>
            <person name="Sutton G.G."/>
            <person name="Fleischmann R.D."/>
            <person name="Eisen J.A."/>
            <person name="White O."/>
            <person name="Salzberg S.L."/>
            <person name="Smith H.O."/>
            <person name="Venter J.C."/>
            <person name="Fraser C.M."/>
        </authorList>
    </citation>
    <scope>NUCLEOTIDE SEQUENCE [LARGE SCALE GENOMIC DNA]</scope>
    <source>
        <strain>ATCC 43589 / DSM 3109 / JCM 10099 / NBRC 100826 / MSB8</strain>
    </source>
</reference>
<reference key="2">
    <citation type="journal article" date="2017" name="Proc. Natl. Acad. Sci. U.S.A.">
        <title>Nonredox thiolation in tRNA occurring via sulfur activation by a [4Fe-4S] cluster.</title>
        <authorList>
            <person name="Arragain S."/>
            <person name="Bimai O."/>
            <person name="Legrand P."/>
            <person name="Caillat S."/>
            <person name="Ravanat J.L."/>
            <person name="Touati N."/>
            <person name="Binet L."/>
            <person name="Atta M."/>
            <person name="Fontecave M."/>
            <person name="Golinelli-Pimpaneau B."/>
        </authorList>
    </citation>
    <scope>FUNCTION</scope>
    <scope>CATALYTIC ACTIVITY</scope>
    <scope>COFACTOR</scope>
    <scope>SUBUNIT</scope>
    <scope>ZINC-BINDING</scope>
    <scope>PATHWAY</scope>
    <source>
        <strain>ATCC 43589 / DSM 3109 / JCM 10099 / NBRC 100826 / MSB8</strain>
    </source>
</reference>
<comment type="function">
    <text evidence="2 3">Catalyzes the ATP-dependent 2-thiolation of 5-methyluridine residue at position 54 in the T loop of tRNAs, leading to 5-methyl-2-thiouridine (m(5)s(2)U or s(2)T) (PubMed:28655838). This modification allows thermal stabilization of tRNAs in thermophilic microorganisms, and is required for cell growth at high temperatures (By similarity). Can use free sulfide as sulfur source in vitro (PubMed:28655838).</text>
</comment>
<comment type="catalytic activity">
    <reaction evidence="3">
        <text>5-methyluridine(54) in tRNA + hydrogen sulfide + ATP = 5-methyl-2-thiouridine(54) in tRNA + AMP + diphosphate</text>
        <dbReference type="Rhea" id="RHEA:55188"/>
        <dbReference type="Rhea" id="RHEA-COMP:10167"/>
        <dbReference type="Rhea" id="RHEA-COMP:13344"/>
        <dbReference type="ChEBI" id="CHEBI:29919"/>
        <dbReference type="ChEBI" id="CHEBI:30616"/>
        <dbReference type="ChEBI" id="CHEBI:33019"/>
        <dbReference type="ChEBI" id="CHEBI:74447"/>
        <dbReference type="ChEBI" id="CHEBI:136799"/>
        <dbReference type="ChEBI" id="CHEBI:456215"/>
    </reaction>
</comment>
<comment type="cofactor">
    <cofactor evidence="3">
        <name>[4Fe-4S] cluster</name>
        <dbReference type="ChEBI" id="CHEBI:49883"/>
    </cofactor>
    <text evidence="3">Binds 1 [4Fe-4S] cluster per subunit. The cluster is chelated by three Cys residues, the fourth Fe with a free coordination site may bind a small ligand, such as exogenous sulfide, thus acting as a sulfur carrier.</text>
</comment>
<comment type="cofactor">
    <cofactor evidence="3">
        <name>Mg(2+)</name>
        <dbReference type="ChEBI" id="CHEBI:18420"/>
    </cofactor>
</comment>
<comment type="pathway">
    <text evidence="3">tRNA modification.</text>
</comment>
<comment type="subunit">
    <text evidence="3">Homodimer.</text>
</comment>
<comment type="miscellaneous">
    <text evidence="5">In TtuA from T.thermophilus, the sulfur inserted into the nucleoside comes from the C-terminal thiocarboxylate of TtuB, but there is no TtuB ortholog in T.maritima.</text>
</comment>
<comment type="miscellaneous">
    <text evidence="6">The thiolation reaction likely consists of two steps: a first activation step by ATP to form an adenylated intermediate of the target base of tRNA, and a second nucleophilic substitution step of the sulfur (S) atom supplied by the hydrosulfide attached to the Fe-S cluster.</text>
</comment>
<comment type="similarity">
    <text evidence="5">Belongs to the TtcA family. TtuA subfamily.</text>
</comment>
<sequence length="304" mass="34934">MKCTKCGKPASVKLRHYNIKLCKEHFNEFIEQRVEKAIKKFKMFGRNSKILIAVSGGKDSVSLWHMLKKLGYEVDALFIRAGKSGMVQKAQEIVEKNAELLNTKLHIVDATEYFGGLSTQEISIMLRRPVCSICGVVRRYLMNKFAYENGYDVVVTGHNLNDEASVLLGNILHWQEGYLERQWPLLPKTHEKLVPKAKPLVLNYEEDIKLYATLNEIPHLEMACPFSVGATSLVYKKILRELEEEQPGITLNFYLGFLKRKKEPKFEVEGLRECKECGYPTTAEVCSFCRLRKQVEKRKNKTPA</sequence>